<keyword id="KW-0032">Aminotransferase</keyword>
<keyword id="KW-0663">Pyridoxal phosphate</keyword>
<keyword id="KW-0808">Transferase</keyword>
<comment type="function">
    <text evidence="2">Involved in the synthesis of meso-diaminopimelate (m-DAP or DL-DAP), required for both lysine and peptidoglycan biosynthesis. Catalyzes the direct conversion of tetrahydrodipicolinate to LL-diaminopimelate. Can also use m-DAP instead of LL-DAP as the amino-group donor.</text>
</comment>
<comment type="catalytic activity">
    <reaction evidence="1">
        <text>(2S,6S)-2,6-diaminopimelate + 2-oxoglutarate = (S)-2,3,4,5-tetrahydrodipicolinate + L-glutamate + H2O + H(+)</text>
        <dbReference type="Rhea" id="RHEA:23988"/>
        <dbReference type="ChEBI" id="CHEBI:15377"/>
        <dbReference type="ChEBI" id="CHEBI:15378"/>
        <dbReference type="ChEBI" id="CHEBI:16810"/>
        <dbReference type="ChEBI" id="CHEBI:16845"/>
        <dbReference type="ChEBI" id="CHEBI:29985"/>
        <dbReference type="ChEBI" id="CHEBI:57609"/>
        <dbReference type="EC" id="2.6.1.83"/>
    </reaction>
</comment>
<comment type="cofactor">
    <cofactor evidence="1">
        <name>pyridoxal 5'-phosphate</name>
        <dbReference type="ChEBI" id="CHEBI:597326"/>
    </cofactor>
</comment>
<comment type="pathway">
    <text evidence="1 2">Amino-acid biosynthesis; L-lysine biosynthesis via DAP pathway; LL-2,6-diaminopimelate from (S)-tetrahydrodipicolinate (aminotransferase route): step 1/1.</text>
</comment>
<comment type="subunit">
    <text evidence="1">Homodimer.</text>
</comment>
<comment type="similarity">
    <text evidence="1">Belongs to the class-I pyridoxal-phosphate-dependent aminotransferase family. LL-diaminopimelate aminotransferase subfamily.</text>
</comment>
<name>DAPAT_BACFN</name>
<proteinExistence type="evidence at protein level"/>
<reference key="1">
    <citation type="journal article" date="2005" name="Science">
        <title>Extensive DNA inversions in the B. fragilis genome control variable gene expression.</title>
        <authorList>
            <person name="Cerdeno-Tarraga A.-M."/>
            <person name="Patrick S."/>
            <person name="Crossman L.C."/>
            <person name="Blakely G."/>
            <person name="Abratt V."/>
            <person name="Lennard N."/>
            <person name="Poxton I."/>
            <person name="Duerden B."/>
            <person name="Harris B."/>
            <person name="Quail M.A."/>
            <person name="Barron A."/>
            <person name="Clark L."/>
            <person name="Corton C."/>
            <person name="Doggett J."/>
            <person name="Holden M.T.G."/>
            <person name="Larke N."/>
            <person name="Line A."/>
            <person name="Lord A."/>
            <person name="Norbertczak H."/>
            <person name="Ormond D."/>
            <person name="Price C."/>
            <person name="Rabbinowitsch E."/>
            <person name="Woodward J."/>
            <person name="Barrell B.G."/>
            <person name="Parkhill J."/>
        </authorList>
    </citation>
    <scope>NUCLEOTIDE SEQUENCE [LARGE SCALE GENOMIC DNA]</scope>
    <source>
        <strain>ATCC 25285 / DSM 2151 / CCUG 4856 / JCM 11019 / LMG 10263 / NCTC 9343 / Onslow / VPI 2553 / EN-2</strain>
    </source>
</reference>
<reference key="2">
    <citation type="journal article" date="2008" name="J. Bacteriol.">
        <title>Biochemical and phylogenetic characterization of a novel diaminopimelate biosynthesis pathway in prokaryotes identifies a diverged form of LL-diaminopimelate aminotransferase.</title>
        <authorList>
            <person name="Hudson A.O."/>
            <person name="Gilvarg C."/>
            <person name="Leustek T."/>
        </authorList>
    </citation>
    <scope>FUNCTION AS A LL-DAP AMINOTRANSFERASE</scope>
    <scope>SUBSTRATE SPECIFICITY</scope>
    <scope>PATHWAY</scope>
</reference>
<sequence>MALVNEHFLKLPGSYLFSDIAKKVNTFKITHPKRDIIRLGIGDVTRPLPKACIEAMHKAVEEMTSAETFRGYGPEQGYDFLIEAIIKNDYAPRGIHLSPTEVFVNDGAKSDTGNIGDILRHDNSVGVTDPIYPVYIDSNVMCGRAGVLDTESGKWSNVTYMPCTAENHFIPAIPEKRIDIVYLCYPNNPTGTTLTKAELKKWVDYALANDTLILFDAAYEAYIREPDIPHSIYEIKGAKKCAIEFRSFSKTAGFTGVRCGYTVVPKELTAATLEGERIPLNRLWNRRQCTKFNGTSYITQRAAEAIYTPEGKEQIQETINYYMTNARIMKEGLESTGLKVYGGVNAPYLWVKTPKGTSSWRFFDQMLYEANVVGTPGVGFGPSGEGYIRLTAFGERDDCIEAMRRIKNRL</sequence>
<gene>
    <name evidence="1" type="primary">dapL</name>
    <name type="ordered locus">BF2666</name>
</gene>
<evidence type="ECO:0000255" key="1">
    <source>
        <dbReference type="HAMAP-Rule" id="MF_01642"/>
    </source>
</evidence>
<evidence type="ECO:0000269" key="2">
    <source>
    </source>
</evidence>
<evidence type="ECO:0000303" key="3">
    <source>
    </source>
</evidence>
<accession>Q5LC03</accession>
<feature type="chain" id="PRO_0000342214" description="LL-diaminopimelate aminotransferase">
    <location>
        <begin position="1"/>
        <end position="410"/>
    </location>
</feature>
<feature type="binding site" evidence="1">
    <location>
        <position position="15"/>
    </location>
    <ligand>
        <name>substrate</name>
    </ligand>
</feature>
<feature type="binding site" evidence="1">
    <location>
        <position position="42"/>
    </location>
    <ligand>
        <name>substrate</name>
    </ligand>
</feature>
<feature type="binding site" evidence="1">
    <location>
        <position position="72"/>
    </location>
    <ligand>
        <name>pyridoxal 5'-phosphate</name>
        <dbReference type="ChEBI" id="CHEBI:597326"/>
    </ligand>
</feature>
<feature type="binding site" evidence="1">
    <location>
        <begin position="108"/>
        <end position="109"/>
    </location>
    <ligand>
        <name>pyridoxal 5'-phosphate</name>
        <dbReference type="ChEBI" id="CHEBI:597326"/>
    </ligand>
</feature>
<feature type="binding site" evidence="1">
    <location>
        <position position="109"/>
    </location>
    <ligand>
        <name>substrate</name>
    </ligand>
</feature>
<feature type="binding site" evidence="1">
    <location>
        <position position="132"/>
    </location>
    <ligand>
        <name>pyridoxal 5'-phosphate</name>
        <dbReference type="ChEBI" id="CHEBI:597326"/>
    </ligand>
</feature>
<feature type="binding site" evidence="1">
    <location>
        <position position="132"/>
    </location>
    <ligand>
        <name>substrate</name>
    </ligand>
</feature>
<feature type="binding site" evidence="1">
    <location>
        <position position="188"/>
    </location>
    <ligand>
        <name>pyridoxal 5'-phosphate</name>
        <dbReference type="ChEBI" id="CHEBI:597326"/>
    </ligand>
</feature>
<feature type="binding site" evidence="1">
    <location>
        <position position="188"/>
    </location>
    <ligand>
        <name>substrate</name>
    </ligand>
</feature>
<feature type="binding site" evidence="1">
    <location>
        <position position="219"/>
    </location>
    <ligand>
        <name>pyridoxal 5'-phosphate</name>
        <dbReference type="ChEBI" id="CHEBI:597326"/>
    </ligand>
</feature>
<feature type="binding site" evidence="1">
    <location>
        <begin position="247"/>
        <end position="249"/>
    </location>
    <ligand>
        <name>pyridoxal 5'-phosphate</name>
        <dbReference type="ChEBI" id="CHEBI:597326"/>
    </ligand>
</feature>
<feature type="binding site" evidence="1">
    <location>
        <position position="258"/>
    </location>
    <ligand>
        <name>pyridoxal 5'-phosphate</name>
        <dbReference type="ChEBI" id="CHEBI:597326"/>
    </ligand>
</feature>
<feature type="binding site" evidence="1">
    <location>
        <position position="293"/>
    </location>
    <ligand>
        <name>pyridoxal 5'-phosphate</name>
        <dbReference type="ChEBI" id="CHEBI:597326"/>
    </ligand>
</feature>
<feature type="binding site" evidence="1">
    <location>
        <position position="293"/>
    </location>
    <ligand>
        <name>substrate</name>
    </ligand>
</feature>
<feature type="binding site" evidence="1">
    <location>
        <position position="389"/>
    </location>
    <ligand>
        <name>substrate</name>
    </ligand>
</feature>
<feature type="modified residue" description="N6-(pyridoxal phosphate)lysine" evidence="1">
    <location>
        <position position="250"/>
    </location>
</feature>
<organism>
    <name type="scientific">Bacteroides fragilis (strain ATCC 25285 / DSM 2151 / CCUG 4856 / JCM 11019 / LMG 10263 / NCTC 9343 / Onslow / VPI 2553 / EN-2)</name>
    <dbReference type="NCBI Taxonomy" id="272559"/>
    <lineage>
        <taxon>Bacteria</taxon>
        <taxon>Pseudomonadati</taxon>
        <taxon>Bacteroidota</taxon>
        <taxon>Bacteroidia</taxon>
        <taxon>Bacteroidales</taxon>
        <taxon>Bacteroidaceae</taxon>
        <taxon>Bacteroides</taxon>
    </lineage>
</organism>
<protein>
    <recommendedName>
        <fullName evidence="1 3">LL-diaminopimelate aminotransferase</fullName>
        <shortName evidence="1 3">DAP-AT</shortName>
        <shortName evidence="1 3">DAP-aminotransferase</shortName>
        <shortName evidence="1 3">LL-DAP-aminotransferase</shortName>
        <ecNumber evidence="1">2.6.1.83</ecNumber>
    </recommendedName>
</protein>
<dbReference type="EC" id="2.6.1.83" evidence="1"/>
<dbReference type="EMBL" id="CR626927">
    <property type="protein sequence ID" value="CAH08365.1"/>
    <property type="molecule type" value="Genomic_DNA"/>
</dbReference>
<dbReference type="RefSeq" id="WP_005793370.1">
    <property type="nucleotide sequence ID" value="NZ_UFTH01000002.1"/>
</dbReference>
<dbReference type="SMR" id="Q5LC03"/>
<dbReference type="PaxDb" id="272559-BF9343_2584"/>
<dbReference type="KEGG" id="bfs:BF9343_2584"/>
<dbReference type="eggNOG" id="COG0436">
    <property type="taxonomic scope" value="Bacteria"/>
</dbReference>
<dbReference type="HOGENOM" id="CLU_051433_0_0_10"/>
<dbReference type="BRENDA" id="2.6.1.83">
    <property type="organism ID" value="755"/>
</dbReference>
<dbReference type="UniPathway" id="UPA00034">
    <property type="reaction ID" value="UER00466"/>
</dbReference>
<dbReference type="Proteomes" id="UP000006731">
    <property type="component" value="Chromosome"/>
</dbReference>
<dbReference type="GO" id="GO:0010285">
    <property type="term" value="F:L,L-diaminopimelate aminotransferase activity"/>
    <property type="evidence" value="ECO:0007669"/>
    <property type="project" value="UniProtKB-UniRule"/>
</dbReference>
<dbReference type="GO" id="GO:0030170">
    <property type="term" value="F:pyridoxal phosphate binding"/>
    <property type="evidence" value="ECO:0007669"/>
    <property type="project" value="UniProtKB-UniRule"/>
</dbReference>
<dbReference type="GO" id="GO:0033362">
    <property type="term" value="P:lysine biosynthetic process via diaminopimelate, diaminopimelate-aminotransferase pathway"/>
    <property type="evidence" value="ECO:0007669"/>
    <property type="project" value="UniProtKB-UniRule"/>
</dbReference>
<dbReference type="CDD" id="cd00609">
    <property type="entry name" value="AAT_like"/>
    <property type="match status" value="1"/>
</dbReference>
<dbReference type="FunFam" id="3.40.640.10:FF:000099">
    <property type="entry name" value="LL-diaminopimelate aminotransferase, chloroplastic"/>
    <property type="match status" value="1"/>
</dbReference>
<dbReference type="Gene3D" id="3.90.1150.10">
    <property type="entry name" value="Aspartate Aminotransferase, domain 1"/>
    <property type="match status" value="1"/>
</dbReference>
<dbReference type="Gene3D" id="3.40.640.10">
    <property type="entry name" value="Type I PLP-dependent aspartate aminotransferase-like (Major domain)"/>
    <property type="match status" value="1"/>
</dbReference>
<dbReference type="HAMAP" id="MF_01642">
    <property type="entry name" value="DapL_aminotrans_1"/>
    <property type="match status" value="1"/>
</dbReference>
<dbReference type="InterPro" id="IPR004839">
    <property type="entry name" value="Aminotransferase_I/II_large"/>
</dbReference>
<dbReference type="InterPro" id="IPR019942">
    <property type="entry name" value="DapL/ALD1"/>
</dbReference>
<dbReference type="InterPro" id="IPR015424">
    <property type="entry name" value="PyrdxlP-dep_Trfase"/>
</dbReference>
<dbReference type="InterPro" id="IPR015421">
    <property type="entry name" value="PyrdxlP-dep_Trfase_major"/>
</dbReference>
<dbReference type="InterPro" id="IPR015422">
    <property type="entry name" value="PyrdxlP-dep_Trfase_small"/>
</dbReference>
<dbReference type="NCBIfam" id="TIGR03542">
    <property type="entry name" value="DAPAT_plant"/>
    <property type="match status" value="1"/>
</dbReference>
<dbReference type="PANTHER" id="PTHR43144">
    <property type="entry name" value="AMINOTRANSFERASE"/>
    <property type="match status" value="1"/>
</dbReference>
<dbReference type="Pfam" id="PF00155">
    <property type="entry name" value="Aminotran_1_2"/>
    <property type="match status" value="1"/>
</dbReference>
<dbReference type="SUPFAM" id="SSF53383">
    <property type="entry name" value="PLP-dependent transferases"/>
    <property type="match status" value="1"/>
</dbReference>